<accession>P08472</accession>
<comment type="function">
    <text>Not known. Could be involved in mesenchyme cell migration, adhesion, fusion, or spicule formation.</text>
</comment>
<comment type="subcellular location">
    <subcellularLocation>
        <location evidence="3">Cell membrane</location>
        <topology evidence="3">Lipid-anchor</topology>
        <topology evidence="3">GPI-anchor</topology>
    </subcellularLocation>
</comment>
<comment type="tissue specificity">
    <text>Restricted to the primary mesenchyme cell lineage.</text>
</comment>
<evidence type="ECO:0000255" key="1"/>
<evidence type="ECO:0000256" key="2">
    <source>
        <dbReference type="SAM" id="MobiDB-lite"/>
    </source>
</evidence>
<evidence type="ECO:0000305" key="3"/>
<dbReference type="EMBL" id="M31750">
    <property type="protein sequence ID" value="AAA30065.1"/>
    <property type="molecule type" value="Genomic_DNA"/>
</dbReference>
<dbReference type="EMBL" id="M31751">
    <property type="protein sequence ID" value="AAA30066.1"/>
    <property type="molecule type" value="mRNA"/>
</dbReference>
<dbReference type="EMBL" id="M16457">
    <property type="protein sequence ID" value="AAA30064.1"/>
    <property type="molecule type" value="mRNA"/>
</dbReference>
<dbReference type="PIR" id="A35006">
    <property type="entry name" value="A35006"/>
</dbReference>
<dbReference type="STRING" id="7668.P08472"/>
<dbReference type="eggNOG" id="ENOG502S02S">
    <property type="taxonomic scope" value="Eukaryota"/>
</dbReference>
<dbReference type="HOGENOM" id="CLU_336276_0_0_1"/>
<dbReference type="InParanoid" id="P08472"/>
<dbReference type="Proteomes" id="UP000007110">
    <property type="component" value="Unassembled WGS sequence"/>
</dbReference>
<dbReference type="GO" id="GO:0005886">
    <property type="term" value="C:plasma membrane"/>
    <property type="evidence" value="ECO:0007669"/>
    <property type="project" value="UniProtKB-SubCell"/>
</dbReference>
<dbReference type="GO" id="GO:0098552">
    <property type="term" value="C:side of membrane"/>
    <property type="evidence" value="ECO:0007669"/>
    <property type="project" value="UniProtKB-KW"/>
</dbReference>
<dbReference type="InterPro" id="IPR055188">
    <property type="entry name" value="Choice_anch_I"/>
</dbReference>
<dbReference type="InterPro" id="IPR052956">
    <property type="entry name" value="Mesenchyme-surface_protein"/>
</dbReference>
<dbReference type="PANTHER" id="PTHR46928">
    <property type="entry name" value="MESENCHYME-SPECIFIC CELL SURFACE GLYCOPROTEIN"/>
    <property type="match status" value="1"/>
</dbReference>
<dbReference type="PANTHER" id="PTHR46928:SF1">
    <property type="entry name" value="MESENCHYME-SPECIFIC CELL SURFACE GLYCOPROTEIN"/>
    <property type="match status" value="1"/>
</dbReference>
<dbReference type="Pfam" id="PF22494">
    <property type="entry name" value="choice_anch_I"/>
    <property type="match status" value="1"/>
</dbReference>
<organism>
    <name type="scientific">Strongylocentrotus purpuratus</name>
    <name type="common">Purple sea urchin</name>
    <dbReference type="NCBI Taxonomy" id="7668"/>
    <lineage>
        <taxon>Eukaryota</taxon>
        <taxon>Metazoa</taxon>
        <taxon>Echinodermata</taxon>
        <taxon>Eleutherozoa</taxon>
        <taxon>Echinozoa</taxon>
        <taxon>Echinoidea</taxon>
        <taxon>Euechinoidea</taxon>
        <taxon>Echinacea</taxon>
        <taxon>Camarodonta</taxon>
        <taxon>Echinidea</taxon>
        <taxon>Strongylocentrotidae</taxon>
        <taxon>Strongylocentrotus</taxon>
    </lineage>
</organism>
<keyword id="KW-1003">Cell membrane</keyword>
<keyword id="KW-0325">Glycoprotein</keyword>
<keyword id="KW-0336">GPI-anchor</keyword>
<keyword id="KW-0449">Lipoprotein</keyword>
<keyword id="KW-0472">Membrane</keyword>
<keyword id="KW-1185">Reference proteome</keyword>
<keyword id="KW-0677">Repeat</keyword>
<keyword id="KW-0732">Signal</keyword>
<reference key="1">
    <citation type="journal article" date="1990" name="J. Biol. Chem.">
        <title>Promoter structure and protein sequence of msp130, a lipid-anchored sea urchin glycoprotein.</title>
        <authorList>
            <person name="Parr B.A."/>
            <person name="Parks A.L."/>
            <person name="Raff R.A."/>
        </authorList>
    </citation>
    <scope>NUCLEOTIDE SEQUENCE [GENOMIC DNA / MRNA]</scope>
</reference>
<reference key="2">
    <citation type="journal article" date="1987" name="Dev. Biol.">
        <title>Antibodies to a fusion protein identify a cDNA clone encoding msp130, a primary mesenchyme-specific cell surface protein of the sea urchin embryo.</title>
        <authorList>
            <person name="Leaf D.S."/>
            <person name="Anstrom J.A."/>
            <person name="Chin J.E."/>
            <person name="Harkey M.A."/>
            <person name="Showman R.M."/>
            <person name="Raff R.A."/>
        </authorList>
    </citation>
    <scope>NUCLEOTIDE SEQUENCE [MRNA] OF 542-779</scope>
</reference>
<sequence>MQFGVPLLVLCLALGSTEATISLKLVSRLYLPFDKLPVGGGAGGAGGAGGAGGGGGGGGGAGGRGGGGGGRGQTGGMYALNNGVAFKSAYDMDKQLAYVGGGQFVQIVDFSDVVQPKVVKQIATEGPVADIAECGDLVAFTQPGKPHFTDVGSLKIYEKYNPATMMMKELCSVEVGSQPIAVRFAQGCSLIIVANEGVMGENNYTKKYVNPEGTITTVRLAGSVSNGPSQQIVNTTFGAGGPMMTTPMAGFPRGTTWSPNAGAGGQGGQGQYPGQGGQGGQGGQGGQGQYPGQGGQGGQGGQGGQGGQGGYPGQGGQGGPGYYPGQGGQGGQGGQGGWGQGGGQGGQGGGNNPQYPMIPTTPLPGTICNGTSTMSYVVSQINFHKFNAPAEVQRLKALHVRQPYTGQLGDPGPHTFSRGLEPRHITLDQQEQIAYISLQENNAIAVVDLNNNTVIDILPMGVKNWKGLKIDASSADRGILFQTYDQLNSFPMPDAIETYYDAMGDLYVVTANEGAKPMMAQCSLEVCPGGPGEFEEVEIGEEFIVEELLPQPVIDSPLGQAMAEETQLGSSLFSMVDGINPAEPEFFNEVFMFGGRGISAYKVDPITMNMTLAWDSGDVIEKEIAKFFPKIFNGAAFSRPPQRVKPFMTKDSRSSGRGPECESLAVGDVQGRKLIFVGIDGVSALAIFSVAPGNSTPVYESLFKDGHIDASYNALYKNRKTGRVSGTVSMYEVIDVPYWMLLKTLGTNIEGSSAISMTSSAFSIFFAFLSGMFAIFMKM</sequence>
<feature type="signal peptide" evidence="1">
    <location>
        <begin position="1"/>
        <end position="15"/>
    </location>
</feature>
<feature type="chain" id="PRO_0000021631" description="Mesenchyme-specific cell surface glycoprotein">
    <location>
        <begin position="16"/>
        <end position="779"/>
    </location>
</feature>
<feature type="region of interest" description="Disordered" evidence="2">
    <location>
        <begin position="249"/>
        <end position="363"/>
    </location>
</feature>
<feature type="compositionally biased region" description="Gly residues" evidence="2">
    <location>
        <begin position="262"/>
        <end position="351"/>
    </location>
</feature>
<feature type="glycosylation site" description="N-linked (GlcNAc...) asparagine" evidence="1">
    <location>
        <position position="203"/>
    </location>
</feature>
<feature type="glycosylation site" description="N-linked (GlcNAc...) asparagine" evidence="1">
    <location>
        <position position="234"/>
    </location>
</feature>
<feature type="glycosylation site" description="N-linked (GlcNAc...) asparagine" evidence="1">
    <location>
        <position position="369"/>
    </location>
</feature>
<feature type="glycosylation site" description="N-linked (GlcNAc...) asparagine" evidence="1">
    <location>
        <position position="451"/>
    </location>
</feature>
<feature type="glycosylation site" description="N-linked (GlcNAc...) asparagine" evidence="1">
    <location>
        <position position="609"/>
    </location>
</feature>
<proteinExistence type="evidence at transcript level"/>
<name>M130_STRPU</name>
<protein>
    <recommendedName>
        <fullName>Mesenchyme-specific cell surface glycoprotein</fullName>
    </recommendedName>
    <alternativeName>
        <fullName>MSP130</fullName>
    </alternativeName>
</protein>